<gene>
    <name evidence="1" type="primary">aspS</name>
    <name type="ordered locus">Aave_3637</name>
</gene>
<keyword id="KW-0030">Aminoacyl-tRNA synthetase</keyword>
<keyword id="KW-0067">ATP-binding</keyword>
<keyword id="KW-0963">Cytoplasm</keyword>
<keyword id="KW-0436">Ligase</keyword>
<keyword id="KW-0547">Nucleotide-binding</keyword>
<keyword id="KW-0648">Protein biosynthesis</keyword>
<sequence length="604" mass="67975">MAMRSHYCGLVTEALMGQTVTLAGWVNRRRDHGGVIFIDLRDREGNVQVVCDPDRADMFKTAEGVRNEFCVQVKGLVRARPEGTTNDSLKSGRIEVLCHELNVLNPSVTPPFQMDDENLSETTRLTHRVLDLRRPYMQRNLMLRYKTAIQVRNFLDKEGFIDIETPMLGKSTPEGARDYLVPSRVHDGQFFALPQSPQLYKQMLMVAGYDRYYQITKCFRDEDLRADRQPEFTQIDCETSFLNEEEIRAIFQRMVTEVFKTQLDVDLGEFPIMTYQDAAFRFGSDKPDLRVKLEFTELTEVMKDVDFKVFSGAANMQGGRVVALRVPGGARENGGLSRGEIDAYTEFVKIYGAKGLAYIKVNELAKGRDGLQSPIVKNIHDAAIAEILKRTGAQDGDLLFFGADKTKVVNDAIGALRLKIGHSEFGRKNGLFENVWAPLWVVDFPMFEYDEDDARWVAVHHPFTSPKDGHEDLMDTDPGKCLAKAYDMVLNGWELGGGSVRIHRAEVQSKVFAALKLTPEDARAKFGYLLDALQYGAPPHGGLAFGLDRLITLMTGAESIRDVIAFPKTQRAQDLLTQAPSPVDEKQLRELHIRLRNPDAAKAA</sequence>
<accession>A1TT99</accession>
<feature type="chain" id="PRO_1000006624" description="Aspartate--tRNA(Asp/Asn) ligase">
    <location>
        <begin position="1"/>
        <end position="604"/>
    </location>
</feature>
<feature type="region of interest" description="Aspartate" evidence="1">
    <location>
        <begin position="198"/>
        <end position="201"/>
    </location>
</feature>
<feature type="binding site" evidence="1">
    <location>
        <position position="174"/>
    </location>
    <ligand>
        <name>L-aspartate</name>
        <dbReference type="ChEBI" id="CHEBI:29991"/>
    </ligand>
</feature>
<feature type="binding site" evidence="1">
    <location>
        <begin position="220"/>
        <end position="222"/>
    </location>
    <ligand>
        <name>ATP</name>
        <dbReference type="ChEBI" id="CHEBI:30616"/>
    </ligand>
</feature>
<feature type="binding site" evidence="1">
    <location>
        <position position="220"/>
    </location>
    <ligand>
        <name>L-aspartate</name>
        <dbReference type="ChEBI" id="CHEBI:29991"/>
    </ligand>
</feature>
<feature type="binding site" evidence="1">
    <location>
        <position position="229"/>
    </location>
    <ligand>
        <name>ATP</name>
        <dbReference type="ChEBI" id="CHEBI:30616"/>
    </ligand>
</feature>
<feature type="binding site" evidence="1">
    <location>
        <position position="460"/>
    </location>
    <ligand>
        <name>L-aspartate</name>
        <dbReference type="ChEBI" id="CHEBI:29991"/>
    </ligand>
</feature>
<feature type="binding site" evidence="1">
    <location>
        <position position="494"/>
    </location>
    <ligand>
        <name>ATP</name>
        <dbReference type="ChEBI" id="CHEBI:30616"/>
    </ligand>
</feature>
<feature type="binding site" evidence="1">
    <location>
        <position position="501"/>
    </location>
    <ligand>
        <name>L-aspartate</name>
        <dbReference type="ChEBI" id="CHEBI:29991"/>
    </ligand>
</feature>
<feature type="binding site" evidence="1">
    <location>
        <begin position="546"/>
        <end position="549"/>
    </location>
    <ligand>
        <name>ATP</name>
        <dbReference type="ChEBI" id="CHEBI:30616"/>
    </ligand>
</feature>
<feature type="site" description="Important for tRNA non-discrimination" evidence="1">
    <location>
        <position position="32"/>
    </location>
</feature>
<feature type="site" description="Important for tRNA non-discrimination" evidence="1">
    <location>
        <position position="83"/>
    </location>
</feature>
<reference key="1">
    <citation type="submission" date="2006-12" db="EMBL/GenBank/DDBJ databases">
        <title>Complete sequence of Acidovorax avenae subsp. citrulli AAC00-1.</title>
        <authorList>
            <person name="Copeland A."/>
            <person name="Lucas S."/>
            <person name="Lapidus A."/>
            <person name="Barry K."/>
            <person name="Detter J.C."/>
            <person name="Glavina del Rio T."/>
            <person name="Dalin E."/>
            <person name="Tice H."/>
            <person name="Pitluck S."/>
            <person name="Kiss H."/>
            <person name="Brettin T."/>
            <person name="Bruce D."/>
            <person name="Han C."/>
            <person name="Tapia R."/>
            <person name="Gilna P."/>
            <person name="Schmutz J."/>
            <person name="Larimer F."/>
            <person name="Land M."/>
            <person name="Hauser L."/>
            <person name="Kyrpides N."/>
            <person name="Kim E."/>
            <person name="Stahl D."/>
            <person name="Richardson P."/>
        </authorList>
    </citation>
    <scope>NUCLEOTIDE SEQUENCE [LARGE SCALE GENOMIC DNA]</scope>
    <source>
        <strain>AAC00-1</strain>
    </source>
</reference>
<dbReference type="EC" id="6.1.1.23" evidence="1"/>
<dbReference type="EMBL" id="CP000512">
    <property type="protein sequence ID" value="ABM34187.1"/>
    <property type="molecule type" value="Genomic_DNA"/>
</dbReference>
<dbReference type="RefSeq" id="WP_011796684.1">
    <property type="nucleotide sequence ID" value="NC_008752.1"/>
</dbReference>
<dbReference type="SMR" id="A1TT99"/>
<dbReference type="STRING" id="397945.Aave_3637"/>
<dbReference type="GeneID" id="79791472"/>
<dbReference type="KEGG" id="aav:Aave_3637"/>
<dbReference type="eggNOG" id="COG0173">
    <property type="taxonomic scope" value="Bacteria"/>
</dbReference>
<dbReference type="HOGENOM" id="CLU_014330_3_2_4"/>
<dbReference type="OrthoDB" id="9802326at2"/>
<dbReference type="Proteomes" id="UP000002596">
    <property type="component" value="Chromosome"/>
</dbReference>
<dbReference type="GO" id="GO:0005737">
    <property type="term" value="C:cytoplasm"/>
    <property type="evidence" value="ECO:0007669"/>
    <property type="project" value="UniProtKB-SubCell"/>
</dbReference>
<dbReference type="GO" id="GO:0004815">
    <property type="term" value="F:aspartate-tRNA ligase activity"/>
    <property type="evidence" value="ECO:0007669"/>
    <property type="project" value="UniProtKB-UniRule"/>
</dbReference>
<dbReference type="GO" id="GO:0050560">
    <property type="term" value="F:aspartate-tRNA(Asn) ligase activity"/>
    <property type="evidence" value="ECO:0007669"/>
    <property type="project" value="UniProtKB-EC"/>
</dbReference>
<dbReference type="GO" id="GO:0005524">
    <property type="term" value="F:ATP binding"/>
    <property type="evidence" value="ECO:0007669"/>
    <property type="project" value="UniProtKB-UniRule"/>
</dbReference>
<dbReference type="GO" id="GO:0003676">
    <property type="term" value="F:nucleic acid binding"/>
    <property type="evidence" value="ECO:0007669"/>
    <property type="project" value="InterPro"/>
</dbReference>
<dbReference type="GO" id="GO:0006422">
    <property type="term" value="P:aspartyl-tRNA aminoacylation"/>
    <property type="evidence" value="ECO:0007669"/>
    <property type="project" value="UniProtKB-UniRule"/>
</dbReference>
<dbReference type="CDD" id="cd00777">
    <property type="entry name" value="AspRS_core"/>
    <property type="match status" value="1"/>
</dbReference>
<dbReference type="CDD" id="cd04317">
    <property type="entry name" value="EcAspRS_like_N"/>
    <property type="match status" value="1"/>
</dbReference>
<dbReference type="Gene3D" id="3.30.930.10">
    <property type="entry name" value="Bira Bifunctional Protein, Domain 2"/>
    <property type="match status" value="1"/>
</dbReference>
<dbReference type="Gene3D" id="3.30.1360.30">
    <property type="entry name" value="GAD-like domain"/>
    <property type="match status" value="1"/>
</dbReference>
<dbReference type="Gene3D" id="2.40.50.140">
    <property type="entry name" value="Nucleic acid-binding proteins"/>
    <property type="match status" value="1"/>
</dbReference>
<dbReference type="HAMAP" id="MF_00044">
    <property type="entry name" value="Asp_tRNA_synth_type1"/>
    <property type="match status" value="1"/>
</dbReference>
<dbReference type="InterPro" id="IPR004364">
    <property type="entry name" value="Aa-tRNA-synt_II"/>
</dbReference>
<dbReference type="InterPro" id="IPR006195">
    <property type="entry name" value="aa-tRNA-synth_II"/>
</dbReference>
<dbReference type="InterPro" id="IPR045864">
    <property type="entry name" value="aa-tRNA-synth_II/BPL/LPL"/>
</dbReference>
<dbReference type="InterPro" id="IPR004524">
    <property type="entry name" value="Asp-tRNA-ligase_1"/>
</dbReference>
<dbReference type="InterPro" id="IPR047089">
    <property type="entry name" value="Asp-tRNA-ligase_1_N"/>
</dbReference>
<dbReference type="InterPro" id="IPR002312">
    <property type="entry name" value="Asp/Asn-tRNA-synth_IIb"/>
</dbReference>
<dbReference type="InterPro" id="IPR047090">
    <property type="entry name" value="AspRS_core"/>
</dbReference>
<dbReference type="InterPro" id="IPR004115">
    <property type="entry name" value="GAD-like_sf"/>
</dbReference>
<dbReference type="InterPro" id="IPR029351">
    <property type="entry name" value="GAD_dom"/>
</dbReference>
<dbReference type="InterPro" id="IPR012340">
    <property type="entry name" value="NA-bd_OB-fold"/>
</dbReference>
<dbReference type="InterPro" id="IPR004365">
    <property type="entry name" value="NA-bd_OB_tRNA"/>
</dbReference>
<dbReference type="NCBIfam" id="TIGR00459">
    <property type="entry name" value="aspS_bact"/>
    <property type="match status" value="1"/>
</dbReference>
<dbReference type="NCBIfam" id="NF001750">
    <property type="entry name" value="PRK00476.1"/>
    <property type="match status" value="1"/>
</dbReference>
<dbReference type="PANTHER" id="PTHR22594:SF5">
    <property type="entry name" value="ASPARTATE--TRNA LIGASE, MITOCHONDRIAL"/>
    <property type="match status" value="1"/>
</dbReference>
<dbReference type="PANTHER" id="PTHR22594">
    <property type="entry name" value="ASPARTYL/LYSYL-TRNA SYNTHETASE"/>
    <property type="match status" value="1"/>
</dbReference>
<dbReference type="Pfam" id="PF02938">
    <property type="entry name" value="GAD"/>
    <property type="match status" value="1"/>
</dbReference>
<dbReference type="Pfam" id="PF00152">
    <property type="entry name" value="tRNA-synt_2"/>
    <property type="match status" value="1"/>
</dbReference>
<dbReference type="Pfam" id="PF01336">
    <property type="entry name" value="tRNA_anti-codon"/>
    <property type="match status" value="1"/>
</dbReference>
<dbReference type="PRINTS" id="PR01042">
    <property type="entry name" value="TRNASYNTHASP"/>
</dbReference>
<dbReference type="SUPFAM" id="SSF55681">
    <property type="entry name" value="Class II aaRS and biotin synthetases"/>
    <property type="match status" value="1"/>
</dbReference>
<dbReference type="SUPFAM" id="SSF55261">
    <property type="entry name" value="GAD domain-like"/>
    <property type="match status" value="1"/>
</dbReference>
<dbReference type="SUPFAM" id="SSF50249">
    <property type="entry name" value="Nucleic acid-binding proteins"/>
    <property type="match status" value="1"/>
</dbReference>
<dbReference type="PROSITE" id="PS50862">
    <property type="entry name" value="AA_TRNA_LIGASE_II"/>
    <property type="match status" value="1"/>
</dbReference>
<protein>
    <recommendedName>
        <fullName evidence="1">Aspartate--tRNA(Asp/Asn) ligase</fullName>
        <ecNumber evidence="1">6.1.1.23</ecNumber>
    </recommendedName>
    <alternativeName>
        <fullName evidence="1">Aspartyl-tRNA synthetase</fullName>
        <shortName evidence="1">AspRS</shortName>
    </alternativeName>
    <alternativeName>
        <fullName evidence="1">Non-discriminating aspartyl-tRNA synthetase</fullName>
        <shortName evidence="1">ND-AspRS</shortName>
    </alternativeName>
</protein>
<name>SYDND_PARC0</name>
<evidence type="ECO:0000255" key="1">
    <source>
        <dbReference type="HAMAP-Rule" id="MF_00044"/>
    </source>
</evidence>
<organism>
    <name type="scientific">Paracidovorax citrulli (strain AAC00-1)</name>
    <name type="common">Acidovorax citrulli</name>
    <dbReference type="NCBI Taxonomy" id="397945"/>
    <lineage>
        <taxon>Bacteria</taxon>
        <taxon>Pseudomonadati</taxon>
        <taxon>Pseudomonadota</taxon>
        <taxon>Betaproteobacteria</taxon>
        <taxon>Burkholderiales</taxon>
        <taxon>Comamonadaceae</taxon>
        <taxon>Paracidovorax</taxon>
    </lineage>
</organism>
<comment type="function">
    <text evidence="1">Aspartyl-tRNA synthetase with relaxed tRNA specificity since it is able to aspartylate not only its cognate tRNA(Asp) but also tRNA(Asn). Reaction proceeds in two steps: L-aspartate is first activated by ATP to form Asp-AMP and then transferred to the acceptor end of tRNA(Asp/Asn).</text>
</comment>
<comment type="catalytic activity">
    <reaction evidence="1">
        <text>tRNA(Asx) + L-aspartate + ATP = L-aspartyl-tRNA(Asx) + AMP + diphosphate</text>
        <dbReference type="Rhea" id="RHEA:18349"/>
        <dbReference type="Rhea" id="RHEA-COMP:9710"/>
        <dbReference type="Rhea" id="RHEA-COMP:9711"/>
        <dbReference type="ChEBI" id="CHEBI:29991"/>
        <dbReference type="ChEBI" id="CHEBI:30616"/>
        <dbReference type="ChEBI" id="CHEBI:33019"/>
        <dbReference type="ChEBI" id="CHEBI:78442"/>
        <dbReference type="ChEBI" id="CHEBI:78516"/>
        <dbReference type="ChEBI" id="CHEBI:456215"/>
        <dbReference type="EC" id="6.1.1.23"/>
    </reaction>
</comment>
<comment type="subunit">
    <text evidence="1">Homodimer.</text>
</comment>
<comment type="subcellular location">
    <subcellularLocation>
        <location evidence="1">Cytoplasm</location>
    </subcellularLocation>
</comment>
<comment type="similarity">
    <text evidence="1">Belongs to the class-II aminoacyl-tRNA synthetase family. Type 1 subfamily.</text>
</comment>
<proteinExistence type="inferred from homology"/>